<organism>
    <name type="scientific">Salmonella typhi</name>
    <dbReference type="NCBI Taxonomy" id="90370"/>
    <lineage>
        <taxon>Bacteria</taxon>
        <taxon>Pseudomonadati</taxon>
        <taxon>Pseudomonadota</taxon>
        <taxon>Gammaproteobacteria</taxon>
        <taxon>Enterobacterales</taxon>
        <taxon>Enterobacteriaceae</taxon>
        <taxon>Salmonella</taxon>
    </lineage>
</organism>
<dbReference type="EMBL" id="AL513382">
    <property type="protein sequence ID" value="CAD08278.1"/>
    <property type="molecule type" value="Genomic_DNA"/>
</dbReference>
<dbReference type="EMBL" id="AE014613">
    <property type="protein sequence ID" value="AAO69389.1"/>
    <property type="molecule type" value="Genomic_DNA"/>
</dbReference>
<dbReference type="RefSeq" id="NP_455648.1">
    <property type="nucleotide sequence ID" value="NC_003198.1"/>
</dbReference>
<dbReference type="RefSeq" id="WP_000075040.1">
    <property type="nucleotide sequence ID" value="NZ_WSUR01000018.1"/>
</dbReference>
<dbReference type="SMR" id="Q8Z7L7"/>
<dbReference type="STRING" id="220341.gene:17585158"/>
<dbReference type="KEGG" id="stt:t1766"/>
<dbReference type="KEGG" id="sty:STY1191"/>
<dbReference type="PATRIC" id="fig|220341.7.peg.1192"/>
<dbReference type="eggNOG" id="COG2814">
    <property type="taxonomic scope" value="Bacteria"/>
</dbReference>
<dbReference type="HOGENOM" id="CLU_001265_57_3_6"/>
<dbReference type="OMA" id="GGHFGMR"/>
<dbReference type="OrthoDB" id="65739at2"/>
<dbReference type="Proteomes" id="UP000000541">
    <property type="component" value="Chromosome"/>
</dbReference>
<dbReference type="Proteomes" id="UP000002670">
    <property type="component" value="Chromosome"/>
</dbReference>
<dbReference type="GO" id="GO:0005886">
    <property type="term" value="C:plasma membrane"/>
    <property type="evidence" value="ECO:0007669"/>
    <property type="project" value="UniProtKB-SubCell"/>
</dbReference>
<dbReference type="GO" id="GO:0022857">
    <property type="term" value="F:transmembrane transporter activity"/>
    <property type="evidence" value="ECO:0007669"/>
    <property type="project" value="UniProtKB-UniRule"/>
</dbReference>
<dbReference type="CDD" id="cd17391">
    <property type="entry name" value="MFS_MdtG_MDR_like"/>
    <property type="match status" value="1"/>
</dbReference>
<dbReference type="FunFam" id="1.20.1250.20:FF:000020">
    <property type="entry name" value="Multidrug resistance protein MdtG"/>
    <property type="match status" value="1"/>
</dbReference>
<dbReference type="FunFam" id="1.20.1250.20:FF:000022">
    <property type="entry name" value="Multidrug resistance protein MdtG"/>
    <property type="match status" value="1"/>
</dbReference>
<dbReference type="Gene3D" id="1.20.1250.20">
    <property type="entry name" value="MFS general substrate transporter like domains"/>
    <property type="match status" value="2"/>
</dbReference>
<dbReference type="HAMAP" id="MF_01528">
    <property type="entry name" value="MFS_MdtG"/>
    <property type="match status" value="1"/>
</dbReference>
<dbReference type="InterPro" id="IPR011701">
    <property type="entry name" value="MFS"/>
</dbReference>
<dbReference type="InterPro" id="IPR020846">
    <property type="entry name" value="MFS_dom"/>
</dbReference>
<dbReference type="InterPro" id="IPR050497">
    <property type="entry name" value="MFS_MdtG_subfamily"/>
</dbReference>
<dbReference type="InterPro" id="IPR005828">
    <property type="entry name" value="MFS_sugar_transport-like"/>
</dbReference>
<dbReference type="InterPro" id="IPR036259">
    <property type="entry name" value="MFS_trans_sf"/>
</dbReference>
<dbReference type="InterPro" id="IPR023692">
    <property type="entry name" value="Mutidrug-R_MdtG"/>
</dbReference>
<dbReference type="InterPro" id="IPR001958">
    <property type="entry name" value="Tet-R_TetA/multi-R_MdtG-like"/>
</dbReference>
<dbReference type="NCBIfam" id="NF007372">
    <property type="entry name" value="PRK09874.1"/>
    <property type="match status" value="1"/>
</dbReference>
<dbReference type="PANTHER" id="PTHR43414">
    <property type="entry name" value="MULTIDRUG RESISTANCE PROTEIN MDTG"/>
    <property type="match status" value="1"/>
</dbReference>
<dbReference type="PANTHER" id="PTHR43414:SF6">
    <property type="entry name" value="MULTIDRUG RESISTANCE PROTEIN MDTG"/>
    <property type="match status" value="1"/>
</dbReference>
<dbReference type="Pfam" id="PF07690">
    <property type="entry name" value="MFS_1"/>
    <property type="match status" value="1"/>
</dbReference>
<dbReference type="Pfam" id="PF00083">
    <property type="entry name" value="Sugar_tr"/>
    <property type="match status" value="1"/>
</dbReference>
<dbReference type="PRINTS" id="PR01035">
    <property type="entry name" value="TCRTETA"/>
</dbReference>
<dbReference type="SUPFAM" id="SSF103473">
    <property type="entry name" value="MFS general substrate transporter"/>
    <property type="match status" value="1"/>
</dbReference>
<dbReference type="PROSITE" id="PS50850">
    <property type="entry name" value="MFS"/>
    <property type="match status" value="1"/>
</dbReference>
<name>MDTG_SALTI</name>
<evidence type="ECO:0000255" key="1">
    <source>
        <dbReference type="HAMAP-Rule" id="MF_01528"/>
    </source>
</evidence>
<accession>Q8Z7L7</accession>
<accession>Q7C9A8</accession>
<keyword id="KW-0997">Cell inner membrane</keyword>
<keyword id="KW-1003">Cell membrane</keyword>
<keyword id="KW-0472">Membrane</keyword>
<keyword id="KW-0812">Transmembrane</keyword>
<keyword id="KW-1133">Transmembrane helix</keyword>
<keyword id="KW-0813">Transport</keyword>
<sequence length="404" mass="43578">MSPSDVPINWKRNLTVTWLGCFLTGAAFSLVMPFLPLYVEQLGVTGHSALNMWSGLVFSITFLFSAIASPFWGGLADRKGRKIILLRSALGMAIVMLLMGMAQNIWQFLILRALLGLLGGFIPNANALIATQVPRHKSGWALGTLSTGGVSGALLGPLAGGLLADHYGLRPVFFITASVLFICFLLTFFFIRENFLPVSKKEMLHVREVVASLKNPRLVLSLFVTTLIIQVATGSIAPILTLYVRELAGNVSNIAFISGMIASVPGVAALLSAPRLGKLGDRIGPEKILIVALIISVLLLIPMSFVQTPWQLALLRFLLGAADGALLPAVQTLLVYNSTNQIAGRIFSYNQSFRDIGNVTGPLMGAAISASYGFRAVFCVTAGVVLFNAIYSWNSLRRRRLAIE</sequence>
<gene>
    <name evidence="1" type="primary">mdtG</name>
    <name type="ordered locus">STY1191</name>
    <name type="ordered locus">t1766</name>
</gene>
<reference key="1">
    <citation type="journal article" date="2001" name="Nature">
        <title>Complete genome sequence of a multiple drug resistant Salmonella enterica serovar Typhi CT18.</title>
        <authorList>
            <person name="Parkhill J."/>
            <person name="Dougan G."/>
            <person name="James K.D."/>
            <person name="Thomson N.R."/>
            <person name="Pickard D."/>
            <person name="Wain J."/>
            <person name="Churcher C.M."/>
            <person name="Mungall K.L."/>
            <person name="Bentley S.D."/>
            <person name="Holden M.T.G."/>
            <person name="Sebaihia M."/>
            <person name="Baker S."/>
            <person name="Basham D."/>
            <person name="Brooks K."/>
            <person name="Chillingworth T."/>
            <person name="Connerton P."/>
            <person name="Cronin A."/>
            <person name="Davis P."/>
            <person name="Davies R.M."/>
            <person name="Dowd L."/>
            <person name="White N."/>
            <person name="Farrar J."/>
            <person name="Feltwell T."/>
            <person name="Hamlin N."/>
            <person name="Haque A."/>
            <person name="Hien T.T."/>
            <person name="Holroyd S."/>
            <person name="Jagels K."/>
            <person name="Krogh A."/>
            <person name="Larsen T.S."/>
            <person name="Leather S."/>
            <person name="Moule S."/>
            <person name="O'Gaora P."/>
            <person name="Parry C."/>
            <person name="Quail M.A."/>
            <person name="Rutherford K.M."/>
            <person name="Simmonds M."/>
            <person name="Skelton J."/>
            <person name="Stevens K."/>
            <person name="Whitehead S."/>
            <person name="Barrell B.G."/>
        </authorList>
    </citation>
    <scope>NUCLEOTIDE SEQUENCE [LARGE SCALE GENOMIC DNA]</scope>
    <source>
        <strain>CT18</strain>
    </source>
</reference>
<reference key="2">
    <citation type="journal article" date="2003" name="J. Bacteriol.">
        <title>Comparative genomics of Salmonella enterica serovar Typhi strains Ty2 and CT18.</title>
        <authorList>
            <person name="Deng W."/>
            <person name="Liou S.-R."/>
            <person name="Plunkett G. III"/>
            <person name="Mayhew G.F."/>
            <person name="Rose D.J."/>
            <person name="Burland V."/>
            <person name="Kodoyianni V."/>
            <person name="Schwartz D.C."/>
            <person name="Blattner F.R."/>
        </authorList>
    </citation>
    <scope>NUCLEOTIDE SEQUENCE [LARGE SCALE GENOMIC DNA]</scope>
    <source>
        <strain>ATCC 700931 / Ty2</strain>
    </source>
</reference>
<comment type="subcellular location">
    <subcellularLocation>
        <location evidence="1">Cell inner membrane</location>
        <topology evidence="1">Multi-pass membrane protein</topology>
    </subcellularLocation>
</comment>
<comment type="similarity">
    <text evidence="1">Belongs to the major facilitator superfamily. DHA1 family. MdtG (TC 2.A.1.2.20) subfamily.</text>
</comment>
<proteinExistence type="inferred from homology"/>
<feature type="chain" id="PRO_0000173339" description="Multidrug resistance protein MdtG">
    <location>
        <begin position="1"/>
        <end position="404"/>
    </location>
</feature>
<feature type="transmembrane region" description="Helical" evidence="1">
    <location>
        <begin position="19"/>
        <end position="39"/>
    </location>
</feature>
<feature type="transmembrane region" description="Helical" evidence="1">
    <location>
        <begin position="56"/>
        <end position="76"/>
    </location>
</feature>
<feature type="transmembrane region" description="Helical" evidence="1">
    <location>
        <begin position="90"/>
        <end position="110"/>
    </location>
</feature>
<feature type="transmembrane region" description="Helical" evidence="1">
    <location>
        <begin position="113"/>
        <end position="133"/>
    </location>
</feature>
<feature type="transmembrane region" description="Helical" evidence="1">
    <location>
        <begin position="144"/>
        <end position="164"/>
    </location>
</feature>
<feature type="transmembrane region" description="Helical" evidence="1">
    <location>
        <begin position="171"/>
        <end position="191"/>
    </location>
</feature>
<feature type="transmembrane region" description="Helical" evidence="1">
    <location>
        <begin position="222"/>
        <end position="242"/>
    </location>
</feature>
<feature type="transmembrane region" description="Helical" evidence="1">
    <location>
        <begin position="254"/>
        <end position="274"/>
    </location>
</feature>
<feature type="transmembrane region" description="Helical" evidence="1">
    <location>
        <begin position="288"/>
        <end position="308"/>
    </location>
</feature>
<feature type="transmembrane region" description="Helical" evidence="1">
    <location>
        <begin position="317"/>
        <end position="337"/>
    </location>
</feature>
<feature type="transmembrane region" description="Helical" evidence="1">
    <location>
        <begin position="376"/>
        <end position="396"/>
    </location>
</feature>
<protein>
    <recommendedName>
        <fullName evidence="1">Multidrug resistance protein MdtG</fullName>
    </recommendedName>
</protein>